<gene>
    <name evidence="1" type="primary">efp</name>
    <name type="ordered locus">Tola_3147</name>
</gene>
<comment type="function">
    <text evidence="1">Involved in peptide bond synthesis. Stimulates efficient translation and peptide-bond synthesis on native or reconstituted 70S ribosomes in vitro. Probably functions indirectly by altering the affinity of the ribosome for aminoacyl-tRNA, thus increasing their reactivity as acceptors for peptidyl transferase.</text>
</comment>
<comment type="pathway">
    <text evidence="1">Protein biosynthesis; polypeptide chain elongation.</text>
</comment>
<comment type="subcellular location">
    <subcellularLocation>
        <location evidence="1">Cytoplasm</location>
    </subcellularLocation>
</comment>
<comment type="similarity">
    <text evidence="1">Belongs to the elongation factor P family.</text>
</comment>
<proteinExistence type="inferred from homology"/>
<accession>C4LDX4</accession>
<dbReference type="EMBL" id="CP001616">
    <property type="protein sequence ID" value="ACQ94735.1"/>
    <property type="molecule type" value="Genomic_DNA"/>
</dbReference>
<dbReference type="RefSeq" id="WP_015880184.1">
    <property type="nucleotide sequence ID" value="NC_012691.1"/>
</dbReference>
<dbReference type="SMR" id="C4LDX4"/>
<dbReference type="STRING" id="595494.Tola_3147"/>
<dbReference type="KEGG" id="tau:Tola_3147"/>
<dbReference type="eggNOG" id="COG0231">
    <property type="taxonomic scope" value="Bacteria"/>
</dbReference>
<dbReference type="HOGENOM" id="CLU_074944_2_1_6"/>
<dbReference type="OrthoDB" id="9801844at2"/>
<dbReference type="UniPathway" id="UPA00345"/>
<dbReference type="Proteomes" id="UP000009073">
    <property type="component" value="Chromosome"/>
</dbReference>
<dbReference type="GO" id="GO:0005737">
    <property type="term" value="C:cytoplasm"/>
    <property type="evidence" value="ECO:0007669"/>
    <property type="project" value="UniProtKB-SubCell"/>
</dbReference>
<dbReference type="GO" id="GO:0003746">
    <property type="term" value="F:translation elongation factor activity"/>
    <property type="evidence" value="ECO:0007669"/>
    <property type="project" value="UniProtKB-UniRule"/>
</dbReference>
<dbReference type="GO" id="GO:0043043">
    <property type="term" value="P:peptide biosynthetic process"/>
    <property type="evidence" value="ECO:0007669"/>
    <property type="project" value="InterPro"/>
</dbReference>
<dbReference type="CDD" id="cd04470">
    <property type="entry name" value="S1_EF-P_repeat_1"/>
    <property type="match status" value="1"/>
</dbReference>
<dbReference type="CDD" id="cd05794">
    <property type="entry name" value="S1_EF-P_repeat_2"/>
    <property type="match status" value="1"/>
</dbReference>
<dbReference type="FunFam" id="2.30.30.30:FF:000003">
    <property type="entry name" value="Elongation factor P"/>
    <property type="match status" value="1"/>
</dbReference>
<dbReference type="FunFam" id="2.40.50.140:FF:000004">
    <property type="entry name" value="Elongation factor P"/>
    <property type="match status" value="1"/>
</dbReference>
<dbReference type="FunFam" id="2.40.50.140:FF:000009">
    <property type="entry name" value="Elongation factor P"/>
    <property type="match status" value="1"/>
</dbReference>
<dbReference type="Gene3D" id="2.30.30.30">
    <property type="match status" value="1"/>
</dbReference>
<dbReference type="Gene3D" id="2.40.50.140">
    <property type="entry name" value="Nucleic acid-binding proteins"/>
    <property type="match status" value="2"/>
</dbReference>
<dbReference type="HAMAP" id="MF_00141">
    <property type="entry name" value="EF_P"/>
    <property type="match status" value="1"/>
</dbReference>
<dbReference type="InterPro" id="IPR015365">
    <property type="entry name" value="Elong-fact-P_C"/>
</dbReference>
<dbReference type="InterPro" id="IPR012340">
    <property type="entry name" value="NA-bd_OB-fold"/>
</dbReference>
<dbReference type="InterPro" id="IPR014722">
    <property type="entry name" value="Rib_uL2_dom2"/>
</dbReference>
<dbReference type="InterPro" id="IPR020599">
    <property type="entry name" value="Transl_elong_fac_P/YeiP"/>
</dbReference>
<dbReference type="InterPro" id="IPR013185">
    <property type="entry name" value="Transl_elong_KOW-like"/>
</dbReference>
<dbReference type="InterPro" id="IPR001059">
    <property type="entry name" value="Transl_elong_P/YeiP_cen"/>
</dbReference>
<dbReference type="InterPro" id="IPR011768">
    <property type="entry name" value="Transl_elongation_fac_P"/>
</dbReference>
<dbReference type="InterPro" id="IPR008991">
    <property type="entry name" value="Translation_prot_SH3-like_sf"/>
</dbReference>
<dbReference type="NCBIfam" id="TIGR00038">
    <property type="entry name" value="efp"/>
    <property type="match status" value="1"/>
</dbReference>
<dbReference type="NCBIfam" id="NF001810">
    <property type="entry name" value="PRK00529.1"/>
    <property type="match status" value="1"/>
</dbReference>
<dbReference type="PANTHER" id="PTHR30053">
    <property type="entry name" value="ELONGATION FACTOR P"/>
    <property type="match status" value="1"/>
</dbReference>
<dbReference type="PANTHER" id="PTHR30053:SF12">
    <property type="entry name" value="ELONGATION FACTOR P (EF-P) FAMILY PROTEIN"/>
    <property type="match status" value="1"/>
</dbReference>
<dbReference type="Pfam" id="PF01132">
    <property type="entry name" value="EFP"/>
    <property type="match status" value="1"/>
</dbReference>
<dbReference type="Pfam" id="PF08207">
    <property type="entry name" value="EFP_N"/>
    <property type="match status" value="1"/>
</dbReference>
<dbReference type="Pfam" id="PF09285">
    <property type="entry name" value="Elong-fact-P_C"/>
    <property type="match status" value="1"/>
</dbReference>
<dbReference type="PIRSF" id="PIRSF005901">
    <property type="entry name" value="EF-P"/>
    <property type="match status" value="1"/>
</dbReference>
<dbReference type="SMART" id="SM01185">
    <property type="entry name" value="EFP"/>
    <property type="match status" value="1"/>
</dbReference>
<dbReference type="SMART" id="SM00841">
    <property type="entry name" value="Elong-fact-P_C"/>
    <property type="match status" value="1"/>
</dbReference>
<dbReference type="SUPFAM" id="SSF50249">
    <property type="entry name" value="Nucleic acid-binding proteins"/>
    <property type="match status" value="2"/>
</dbReference>
<dbReference type="SUPFAM" id="SSF50104">
    <property type="entry name" value="Translation proteins SH3-like domain"/>
    <property type="match status" value="1"/>
</dbReference>
<reference key="1">
    <citation type="submission" date="2009-05" db="EMBL/GenBank/DDBJ databases">
        <title>Complete sequence of Tolumonas auensis DSM 9187.</title>
        <authorList>
            <consortium name="US DOE Joint Genome Institute"/>
            <person name="Lucas S."/>
            <person name="Copeland A."/>
            <person name="Lapidus A."/>
            <person name="Glavina del Rio T."/>
            <person name="Tice H."/>
            <person name="Bruce D."/>
            <person name="Goodwin L."/>
            <person name="Pitluck S."/>
            <person name="Chertkov O."/>
            <person name="Brettin T."/>
            <person name="Detter J.C."/>
            <person name="Han C."/>
            <person name="Larimer F."/>
            <person name="Land M."/>
            <person name="Hauser L."/>
            <person name="Kyrpides N."/>
            <person name="Mikhailova N."/>
            <person name="Spring S."/>
            <person name="Beller H."/>
        </authorList>
    </citation>
    <scope>NUCLEOTIDE SEQUENCE [LARGE SCALE GENOMIC DNA]</scope>
    <source>
        <strain>DSM 9187 / NBRC 110442 / TA 4</strain>
    </source>
</reference>
<evidence type="ECO:0000255" key="1">
    <source>
        <dbReference type="HAMAP-Rule" id="MF_00141"/>
    </source>
</evidence>
<protein>
    <recommendedName>
        <fullName evidence="1">Elongation factor P</fullName>
        <shortName evidence="1">EF-P</shortName>
    </recommendedName>
</protein>
<organism>
    <name type="scientific">Tolumonas auensis (strain DSM 9187 / NBRC 110442 / TA 4)</name>
    <dbReference type="NCBI Taxonomy" id="595494"/>
    <lineage>
        <taxon>Bacteria</taxon>
        <taxon>Pseudomonadati</taxon>
        <taxon>Pseudomonadota</taxon>
        <taxon>Gammaproteobacteria</taxon>
        <taxon>Aeromonadales</taxon>
        <taxon>Aeromonadaceae</taxon>
        <taxon>Tolumonas</taxon>
    </lineage>
</organism>
<keyword id="KW-0963">Cytoplasm</keyword>
<keyword id="KW-0251">Elongation factor</keyword>
<keyword id="KW-0648">Protein biosynthesis</keyword>
<keyword id="KW-1185">Reference proteome</keyword>
<sequence>MKIAQEIRVGNVIMIGKDPMVVLKTEFNKSGRNSAVVKMKMKNLLSGAGAETVFKADDKLDTVQLERKECTYSYFADPMYVFMDTEYNQYDIEKENLGDVLNYLIDGMEDICEVTFYDGKAISMELPITIVREVEYTEPSVRGDTSGKVMKPAKLKGTDATISVADFVKIGDKIEIDTRTGEFKRRV</sequence>
<name>EFP_TOLAT</name>
<feature type="chain" id="PRO_1000203282" description="Elongation factor P">
    <location>
        <begin position="1"/>
        <end position="187"/>
    </location>
</feature>